<accession>B9L9C2</accession>
<comment type="function">
    <text evidence="1">Reversibly transfers an adenylyl group from ATP to 4'-phosphopantetheine, yielding dephospho-CoA (dPCoA) and pyrophosphate.</text>
</comment>
<comment type="catalytic activity">
    <reaction evidence="1">
        <text>(R)-4'-phosphopantetheine + ATP + H(+) = 3'-dephospho-CoA + diphosphate</text>
        <dbReference type="Rhea" id="RHEA:19801"/>
        <dbReference type="ChEBI" id="CHEBI:15378"/>
        <dbReference type="ChEBI" id="CHEBI:30616"/>
        <dbReference type="ChEBI" id="CHEBI:33019"/>
        <dbReference type="ChEBI" id="CHEBI:57328"/>
        <dbReference type="ChEBI" id="CHEBI:61723"/>
        <dbReference type="EC" id="2.7.7.3"/>
    </reaction>
</comment>
<comment type="cofactor">
    <cofactor evidence="1">
        <name>Mg(2+)</name>
        <dbReference type="ChEBI" id="CHEBI:18420"/>
    </cofactor>
</comment>
<comment type="pathway">
    <text evidence="1">Cofactor biosynthesis; coenzyme A biosynthesis; CoA from (R)-pantothenate: step 4/5.</text>
</comment>
<comment type="subunit">
    <text evidence="1">Homohexamer.</text>
</comment>
<comment type="subcellular location">
    <subcellularLocation>
        <location evidence="1">Cytoplasm</location>
    </subcellularLocation>
</comment>
<comment type="similarity">
    <text evidence="1">Belongs to the bacterial CoaD family.</text>
</comment>
<gene>
    <name evidence="1" type="primary">coaD</name>
    <name type="ordered locus">NAMH_0827</name>
</gene>
<evidence type="ECO:0000255" key="1">
    <source>
        <dbReference type="HAMAP-Rule" id="MF_00151"/>
    </source>
</evidence>
<proteinExistence type="inferred from homology"/>
<feature type="chain" id="PRO_1000123294" description="Phosphopantetheine adenylyltransferase">
    <location>
        <begin position="1"/>
        <end position="154"/>
    </location>
</feature>
<feature type="binding site" evidence="1">
    <location>
        <begin position="10"/>
        <end position="11"/>
    </location>
    <ligand>
        <name>ATP</name>
        <dbReference type="ChEBI" id="CHEBI:30616"/>
    </ligand>
</feature>
<feature type="binding site" evidence="1">
    <location>
        <position position="10"/>
    </location>
    <ligand>
        <name>substrate</name>
    </ligand>
</feature>
<feature type="binding site" evidence="1">
    <location>
        <position position="18"/>
    </location>
    <ligand>
        <name>ATP</name>
        <dbReference type="ChEBI" id="CHEBI:30616"/>
    </ligand>
</feature>
<feature type="binding site" evidence="1">
    <location>
        <position position="42"/>
    </location>
    <ligand>
        <name>substrate</name>
    </ligand>
</feature>
<feature type="binding site" evidence="1">
    <location>
        <position position="74"/>
    </location>
    <ligand>
        <name>substrate</name>
    </ligand>
</feature>
<feature type="binding site" evidence="1">
    <location>
        <position position="88"/>
    </location>
    <ligand>
        <name>substrate</name>
    </ligand>
</feature>
<feature type="binding site" evidence="1">
    <location>
        <begin position="89"/>
        <end position="91"/>
    </location>
    <ligand>
        <name>ATP</name>
        <dbReference type="ChEBI" id="CHEBI:30616"/>
    </ligand>
</feature>
<feature type="binding site" evidence="1">
    <location>
        <position position="99"/>
    </location>
    <ligand>
        <name>ATP</name>
        <dbReference type="ChEBI" id="CHEBI:30616"/>
    </ligand>
</feature>
<feature type="binding site" evidence="1">
    <location>
        <begin position="124"/>
        <end position="130"/>
    </location>
    <ligand>
        <name>ATP</name>
        <dbReference type="ChEBI" id="CHEBI:30616"/>
    </ligand>
</feature>
<feature type="site" description="Transition state stabilizer" evidence="1">
    <location>
        <position position="18"/>
    </location>
</feature>
<keyword id="KW-0067">ATP-binding</keyword>
<keyword id="KW-0173">Coenzyme A biosynthesis</keyword>
<keyword id="KW-0963">Cytoplasm</keyword>
<keyword id="KW-0460">Magnesium</keyword>
<keyword id="KW-0547">Nucleotide-binding</keyword>
<keyword id="KW-0548">Nucleotidyltransferase</keyword>
<keyword id="KW-0808">Transferase</keyword>
<reference key="1">
    <citation type="journal article" date="2009" name="PLoS Genet.">
        <title>Adaptations to submarine hydrothermal environments exemplified by the genome of Nautilia profundicola.</title>
        <authorList>
            <person name="Campbell B.J."/>
            <person name="Smith J.L."/>
            <person name="Hanson T.E."/>
            <person name="Klotz M.G."/>
            <person name="Stein L.Y."/>
            <person name="Lee C.K."/>
            <person name="Wu D."/>
            <person name="Robinson J.M."/>
            <person name="Khouri H.M."/>
            <person name="Eisen J.A."/>
            <person name="Cary S.C."/>
        </authorList>
    </citation>
    <scope>NUCLEOTIDE SEQUENCE [LARGE SCALE GENOMIC DNA]</scope>
    <source>
        <strain>ATCC BAA-1463 / DSM 18972 / AmH</strain>
    </source>
</reference>
<name>COAD_NAUPA</name>
<organism>
    <name type="scientific">Nautilia profundicola (strain ATCC BAA-1463 / DSM 18972 / AmH)</name>
    <dbReference type="NCBI Taxonomy" id="598659"/>
    <lineage>
        <taxon>Bacteria</taxon>
        <taxon>Pseudomonadati</taxon>
        <taxon>Campylobacterota</taxon>
        <taxon>Epsilonproteobacteria</taxon>
        <taxon>Nautiliales</taxon>
        <taxon>Nautiliaceae</taxon>
        <taxon>Nautilia</taxon>
    </lineage>
</organism>
<sequence length="154" mass="17596">MYTKAIYPGTFDPVTNGHLDIIKRACKMFDKIIVAVADNKDKKTMFSLEKRVELMKKATSHLPKIEVESFNSLLVDFAREKECKIIIRGLRAVSDFEYELQMGYANKSLDSEIDTIYLMPNLENAFISSSVVRSILKYNGDVSHLIPNEIIKDL</sequence>
<dbReference type="EC" id="2.7.7.3" evidence="1"/>
<dbReference type="EMBL" id="CP001279">
    <property type="protein sequence ID" value="ACM93281.1"/>
    <property type="molecule type" value="Genomic_DNA"/>
</dbReference>
<dbReference type="RefSeq" id="WP_015902333.1">
    <property type="nucleotide sequence ID" value="NC_012115.1"/>
</dbReference>
<dbReference type="SMR" id="B9L9C2"/>
<dbReference type="STRING" id="598659.NAMH_0827"/>
<dbReference type="KEGG" id="nam:NAMH_0827"/>
<dbReference type="eggNOG" id="COG0669">
    <property type="taxonomic scope" value="Bacteria"/>
</dbReference>
<dbReference type="HOGENOM" id="CLU_100149_0_1_7"/>
<dbReference type="OrthoDB" id="9806661at2"/>
<dbReference type="UniPathway" id="UPA00241">
    <property type="reaction ID" value="UER00355"/>
</dbReference>
<dbReference type="Proteomes" id="UP000000448">
    <property type="component" value="Chromosome"/>
</dbReference>
<dbReference type="GO" id="GO:0005737">
    <property type="term" value="C:cytoplasm"/>
    <property type="evidence" value="ECO:0007669"/>
    <property type="project" value="UniProtKB-SubCell"/>
</dbReference>
<dbReference type="GO" id="GO:0005524">
    <property type="term" value="F:ATP binding"/>
    <property type="evidence" value="ECO:0007669"/>
    <property type="project" value="UniProtKB-KW"/>
</dbReference>
<dbReference type="GO" id="GO:0004595">
    <property type="term" value="F:pantetheine-phosphate adenylyltransferase activity"/>
    <property type="evidence" value="ECO:0007669"/>
    <property type="project" value="UniProtKB-UniRule"/>
</dbReference>
<dbReference type="GO" id="GO:0015937">
    <property type="term" value="P:coenzyme A biosynthetic process"/>
    <property type="evidence" value="ECO:0007669"/>
    <property type="project" value="UniProtKB-UniRule"/>
</dbReference>
<dbReference type="CDD" id="cd02163">
    <property type="entry name" value="PPAT"/>
    <property type="match status" value="1"/>
</dbReference>
<dbReference type="Gene3D" id="3.40.50.620">
    <property type="entry name" value="HUPs"/>
    <property type="match status" value="1"/>
</dbReference>
<dbReference type="HAMAP" id="MF_00151">
    <property type="entry name" value="PPAT_bact"/>
    <property type="match status" value="1"/>
</dbReference>
<dbReference type="InterPro" id="IPR004821">
    <property type="entry name" value="Cyt_trans-like"/>
</dbReference>
<dbReference type="InterPro" id="IPR001980">
    <property type="entry name" value="PPAT"/>
</dbReference>
<dbReference type="InterPro" id="IPR014729">
    <property type="entry name" value="Rossmann-like_a/b/a_fold"/>
</dbReference>
<dbReference type="NCBIfam" id="TIGR01510">
    <property type="entry name" value="coaD_prev_kdtB"/>
    <property type="match status" value="1"/>
</dbReference>
<dbReference type="NCBIfam" id="TIGR00125">
    <property type="entry name" value="cyt_tran_rel"/>
    <property type="match status" value="1"/>
</dbReference>
<dbReference type="PANTHER" id="PTHR21342">
    <property type="entry name" value="PHOSPHOPANTETHEINE ADENYLYLTRANSFERASE"/>
    <property type="match status" value="1"/>
</dbReference>
<dbReference type="PANTHER" id="PTHR21342:SF1">
    <property type="entry name" value="PHOSPHOPANTETHEINE ADENYLYLTRANSFERASE"/>
    <property type="match status" value="1"/>
</dbReference>
<dbReference type="Pfam" id="PF01467">
    <property type="entry name" value="CTP_transf_like"/>
    <property type="match status" value="1"/>
</dbReference>
<dbReference type="PRINTS" id="PR01020">
    <property type="entry name" value="LPSBIOSNTHSS"/>
</dbReference>
<dbReference type="SUPFAM" id="SSF52374">
    <property type="entry name" value="Nucleotidylyl transferase"/>
    <property type="match status" value="1"/>
</dbReference>
<protein>
    <recommendedName>
        <fullName evidence="1">Phosphopantetheine adenylyltransferase</fullName>
        <ecNumber evidence="1">2.7.7.3</ecNumber>
    </recommendedName>
    <alternativeName>
        <fullName evidence="1">Dephospho-CoA pyrophosphorylase</fullName>
    </alternativeName>
    <alternativeName>
        <fullName evidence="1">Pantetheine-phosphate adenylyltransferase</fullName>
        <shortName evidence="1">PPAT</shortName>
    </alternativeName>
</protein>